<evidence type="ECO:0000250" key="1"/>
<evidence type="ECO:0000250" key="2">
    <source>
        <dbReference type="UniProtKB" id="O08785"/>
    </source>
</evidence>
<evidence type="ECO:0000250" key="3">
    <source>
        <dbReference type="UniProtKB" id="O15516"/>
    </source>
</evidence>
<evidence type="ECO:0000255" key="4">
    <source>
        <dbReference type="PROSITE-ProRule" id="PRU00140"/>
    </source>
</evidence>
<evidence type="ECO:0000255" key="5">
    <source>
        <dbReference type="PROSITE-ProRule" id="PRU00981"/>
    </source>
</evidence>
<evidence type="ECO:0000256" key="6">
    <source>
        <dbReference type="SAM" id="MobiDB-lite"/>
    </source>
</evidence>
<evidence type="ECO:0000269" key="7">
    <source>
    </source>
</evidence>
<evidence type="ECO:0000269" key="8">
    <source>
    </source>
</evidence>
<evidence type="ECO:0000269" key="9">
    <source>
    </source>
</evidence>
<evidence type="ECO:0000269" key="10">
    <source>
    </source>
</evidence>
<evidence type="ECO:0000303" key="11">
    <source>
    </source>
</evidence>
<evidence type="ECO:0000303" key="12">
    <source>
    </source>
</evidence>
<evidence type="ECO:0000303" key="13">
    <source>
    </source>
</evidence>
<evidence type="ECO:0000305" key="14"/>
<name>CLOCK_CHICK</name>
<accession>Q8QGQ6</accession>
<accession>Q9W6Q2</accession>
<accession>Q9W7C3</accession>
<comment type="function">
    <text evidence="2 8 9 10">Transcriptional activator which forms a core component of the circadian clock. The circadian clock, an internal time-keeping system, regulates various physiological processes through the generation of approximately 24 hour circadian rhythms in gene expression, which are translated into rhythms in metabolism and behavior. It is derived from the Latin roots 'circa' (about) and 'diem' (day) and acts as an important regulator of a wide array of physiological functions including metabolism, sleep, body temperature, blood pressure, endocrine, immune, cardiovascular, and renal function. Consists of two major components: the central clock, residing in the suprachiasmatic nucleus (SCN) of the brain, and the peripheral clocks that are present in nearly every tissue and organ system. Both the central and peripheral clocks can be reset by environmental cues, also known as Zeitgebers (German for 'timegivers'). The predominant Zeitgeber for the central clock is light, which is sensed by retina and signals directly to the SCN. The central clock entrains the peripheral clocks through neuronal and hormonal signals, body temperature and feeding-related cues, aligning all clocks with the external light/dark cycle. Circadian rhythms allow an organism to achieve temporal homeostasis with its environment at the molecular level by regulating gene expression to create a peak of protein expression once every 24 hours to control when a particular physiological process is most active with respect to the solar day. Transcription and translation of core clock components (CLOCK, NPAS2, BMAL1, BMAL2, PER1, PER2, PER3, CRY1 and CRY2) plays a critical role in rhythm generation, whereas delays imposed by post-translational modifications (PTMs) are important for determining the period (tau) of the rhythms (tau refers to the period of a rhythm and is the length, in time, of one complete cycle). A diurnal rhythm is synchronized with the day/night cycle, while the ultradian and infradian rhythms have a period shorter and longer than 24 hours, respectively. Disruptions in the circadian rhythms contribute to the pathology of cardiovascular diseases, cancer, metabolic syndromes and aging. A transcription/translation feedback loop (TTFL) forms the core of the molecular circadian clock mechanism. Transcription factors, CLOCK or NPAS2 and BMAL1 or BMAL2, form the positive limb of the feedback loop, act in the form of a heterodimer and activate the transcription of core clock genes and clock-controlled genes (involved in key metabolic processes), harboring E-box elements (5'-CACGTG-3') within their promoters. The core clock genes: PER1/2/3 and CRY1/2 which are transcriptional repressors form the negative limb of the feedback loop and interact with the CLOCK|NPAS2-BMAL1|BMAL2 heterodimer inhibiting its activity and thereby negatively regulating their own expression. This heterodimer also activates nuclear receptors NR1D1/2 and RORA/B/G, which form a second feedback loop and which activate and repress BMAL1 transcription, respectively. CLOCK regulates the circadian expression of AANAT in the retinal photoreceptor cells. The preferred binding motif for the CLOCK-BMAL1 heterodimer is 5'-CACGTGA-3', which contains a flanking adenine nucleotide at the 3-prime end of the canonical 6-nucleotide E-box sequence (By similarity). CLOCK specifically binds to the half-site 5'-CAC-3', while BMAL1 binds to the half-site 5'-GTGA-3' (By similarity).</text>
</comment>
<comment type="subunit">
    <text evidence="2 8 9">Component of the circadian clock oscillator which includes the CRY proteins, CLOCK or NPAS2, BMAL1 or BMAL2, CSNK1D and/or CSNK1E, TIMELESS and the PER proteins (By similarity). Forms a heterodimer with BMAL1 (PubMed:10931848). The CLOCK-BMAL1 heterodimer is required for E-box-dependent transactivation, for CLOCK nuclear translocation and degradation, and for phosphorylation of both CLOCK and BMAL1 (By similarity). Interaction with PER and CRY proteins requires translocation to the nucleus (By similarity). Interaction of the CLOCK-BMAL1 heterodimer with PER or CRY inhibits transcription activation (By similarity). Interacts with BMAL2 (PubMed:11554928).</text>
</comment>
<comment type="subcellular location">
    <subcellularLocation>
        <location evidence="2">Cytoplasm</location>
    </subcellularLocation>
    <subcellularLocation>
        <location evidence="5">Nucleus</location>
    </subcellularLocation>
    <subcellularLocation>
        <location evidence="3">Cytoplasm</location>
        <location evidence="3">Cytosol</location>
    </subcellularLocation>
    <text evidence="2">Shuttling between the cytoplasm and the nucleus is under circadian regulation and is BMAL1-dependent.</text>
</comment>
<comment type="alternative products">
    <event type="alternative splicing"/>
    <isoform>
        <id>Q8QGQ6-1</id>
        <name>1</name>
        <sequence type="displayed"/>
    </isoform>
    <isoform>
        <id>Q8QGQ6-2</id>
        <name>2</name>
        <sequence type="described" ref="VSP_021796"/>
    </isoform>
</comment>
<comment type="tissue specificity">
    <text evidence="7 8 9 10">Expressed in the retinal photoreceptor cells (at protein level). Isoform 1 is expressed in both the retina and pineal gland. Isoform 2 is expressed mainly in the pineal gland.</text>
</comment>
<comment type="induction">
    <text evidence="7 8 9 10">Expressed in a circadian rhythm manner in the retina. Levels increase over daylight hours, reaching maximum levels between ZT12 and ZT18. Expression levels continue to oscillate during constant darkness, with levels increasing during subjective day to reach maximum levels between day/night transition. In the pineal gland, shows no robust circadian rhythm with only a slight increase in expression between ZT10-18.</text>
</comment>
<comment type="PTM">
    <text evidence="2">Ubiquitinated, leading to its proteasomal degradation.</text>
</comment>
<comment type="PTM">
    <text evidence="2">O-glycosylated; contains O-GlcNAc. O-glycosylation by OGT prevents protein degradation by inhibiting ubiquitination. It also stabilizes the CLOCK-BMAL1 heterodimer thereby increasing CLOCK-BMAL1-mediated transcriptional activation of PER1/2/3 and CRY1/2.</text>
</comment>
<comment type="PTM">
    <text evidence="2">Phosphorylation is dependent on the CLOCK-BMAL1 heterodimer formation. Phosphorylation enhances the transcriptional activity, alters the subcellular localization and decreases the stability of the heterodimer by promoting its degradation.</text>
</comment>
<comment type="PTM">
    <text evidence="2">Sumoylation enhances its transcriptional activity and interaction with ESR1, resulting in up-regulation of ESR1 activity. Estrogen stimulates sumoylation. Desumoylation by SENP1 negatively regulates its transcriptional activity.</text>
</comment>
<comment type="PTM">
    <text evidence="2">Undergoes lysosome-mediated degradation in a time-dependent manner in the liver.</text>
</comment>
<gene>
    <name type="primary">CLOCK</name>
</gene>
<reference key="1">
    <citation type="journal article" date="1999" name="Brain Res. Mol. Brain Res.">
        <title>Circadian regulation of iodopsin and clock is altered in the retinal degeneration chicken retina.</title>
        <authorList>
            <person name="Larkin P."/>
            <person name="Baehr W."/>
            <person name="Semple-Rowland S.L."/>
        </authorList>
    </citation>
    <scope>NUCLEOTIDE SEQUENCE [MRNA] (ISOFORMS 1 AND 2)</scope>
    <scope>TISSUE SPECIFICITY</scope>
    <scope>INDUCTION</scope>
    <source>
        <tissue>Retina</tissue>
    </source>
</reference>
<reference key="2">
    <citation type="journal article" date="2000" name="J. Biol. Chem.">
        <title>Characterization of the chicken serotonin N-acetyltransferase gene. Activation via clock gene heterodimer/E box interaction.</title>
        <authorList>
            <person name="Chong N.W."/>
            <person name="Bernard M."/>
            <person name="Klein D.C."/>
        </authorList>
    </citation>
    <scope>NUCLEOTIDE SEQUENCE [MRNA] (ISOFORM 2)</scope>
    <scope>FUNCTION</scope>
    <scope>INTERACTION WITH BMAL1</scope>
    <scope>INDUCTION</scope>
    <scope>TISSUE SPECIFICITY</scope>
</reference>
<reference key="3">
    <citation type="journal article" date="2001" name="Genes Cells">
        <title>Chicken pineal clock genes: implication of BMAL2 as a bidirectional regulator in circadian clock oscillation.</title>
        <authorList>
            <person name="Okano T."/>
            <person name="Yamamoto K."/>
            <person name="Okano K."/>
            <person name="Hirota T."/>
            <person name="Kasahara T."/>
            <person name="Sasaki M."/>
            <person name="Takanaka Y."/>
            <person name="Fukada Y."/>
        </authorList>
    </citation>
    <scope>NUCLEOTIDE SEQUENCE [MRNA] (ISOFORM 2)</scope>
    <scope>FUNCTION</scope>
    <scope>TISSUE SPECIFICITY</scope>
    <scope>INDUCTION</scope>
    <scope>INTERACTION WITH BMAL1 AND BMAL2</scope>
    <source>
        <tissue>Pineal gland</tissue>
    </source>
</reference>
<reference key="4">
    <citation type="journal article" date="2010" name="J. Neurochem.">
        <title>CLOCK and NPAS2 have overlapping roles in the circadian oscillation of arylalkylamine N-acetyltransferase mRNA in chicken cone photoreceptors.</title>
        <authorList>
            <person name="Haque R."/>
            <person name="Ali F.G."/>
            <person name="Biscoglia R."/>
            <person name="Abey J."/>
            <person name="Weller J."/>
            <person name="Klein D."/>
            <person name="Iuvone P.M."/>
        </authorList>
    </citation>
    <scope>FUNCTION</scope>
    <scope>TISSUE SPECIFICITY</scope>
    <scope>INDUCTION</scope>
</reference>
<organism>
    <name type="scientific">Gallus gallus</name>
    <name type="common">Chicken</name>
    <dbReference type="NCBI Taxonomy" id="9031"/>
    <lineage>
        <taxon>Eukaryota</taxon>
        <taxon>Metazoa</taxon>
        <taxon>Chordata</taxon>
        <taxon>Craniata</taxon>
        <taxon>Vertebrata</taxon>
        <taxon>Euteleostomi</taxon>
        <taxon>Archelosauria</taxon>
        <taxon>Archosauria</taxon>
        <taxon>Dinosauria</taxon>
        <taxon>Saurischia</taxon>
        <taxon>Theropoda</taxon>
        <taxon>Coelurosauria</taxon>
        <taxon>Aves</taxon>
        <taxon>Neognathae</taxon>
        <taxon>Galloanserae</taxon>
        <taxon>Galliformes</taxon>
        <taxon>Phasianidae</taxon>
        <taxon>Phasianinae</taxon>
        <taxon>Gallus</taxon>
    </lineage>
</organism>
<feature type="chain" id="PRO_0000262642" description="Circadian locomoter output cycles protein kaput">
    <location>
        <begin position="1"/>
        <end position="875"/>
    </location>
</feature>
<feature type="domain" description="bHLH" evidence="5">
    <location>
        <begin position="34"/>
        <end position="84"/>
    </location>
</feature>
<feature type="domain" description="PAS 1" evidence="4">
    <location>
        <begin position="107"/>
        <end position="177"/>
    </location>
</feature>
<feature type="domain" description="PAS 2" evidence="4">
    <location>
        <begin position="262"/>
        <end position="332"/>
    </location>
</feature>
<feature type="domain" description="PAC">
    <location>
        <begin position="336"/>
        <end position="379"/>
    </location>
</feature>
<feature type="region of interest" description="Disordered" evidence="6">
    <location>
        <begin position="420"/>
        <end position="507"/>
    </location>
</feature>
<feature type="region of interest" description="Implicated in the circadian rhythmicity" evidence="1">
    <location>
        <begin position="516"/>
        <end position="566"/>
    </location>
</feature>
<feature type="region of interest" description="Disordered" evidence="6">
    <location>
        <begin position="628"/>
        <end position="674"/>
    </location>
</feature>
<feature type="region of interest" description="Disordered" evidence="6">
    <location>
        <begin position="794"/>
        <end position="813"/>
    </location>
</feature>
<feature type="region of interest" description="Disordered" evidence="6">
    <location>
        <begin position="842"/>
        <end position="875"/>
    </location>
</feature>
<feature type="short sequence motif" description="Nuclear localization signal" evidence="2">
    <location>
        <begin position="32"/>
        <end position="47"/>
    </location>
</feature>
<feature type="compositionally biased region" description="Polar residues" evidence="6">
    <location>
        <begin position="447"/>
        <end position="468"/>
    </location>
</feature>
<feature type="compositionally biased region" description="Low complexity" evidence="6">
    <location>
        <begin position="476"/>
        <end position="490"/>
    </location>
</feature>
<feature type="compositionally biased region" description="Polar residues" evidence="6">
    <location>
        <begin position="491"/>
        <end position="507"/>
    </location>
</feature>
<feature type="compositionally biased region" description="Low complexity" evidence="6">
    <location>
        <begin position="842"/>
        <end position="857"/>
    </location>
</feature>
<feature type="site" description="Interaction with E-box DNA" evidence="3">
    <location>
        <position position="39"/>
    </location>
</feature>
<feature type="site" description="Interaction with E-box DNA" evidence="3">
    <location>
        <position position="43"/>
    </location>
</feature>
<feature type="site" description="Interaction with E-box DNA" evidence="3">
    <location>
        <position position="47"/>
    </location>
</feature>
<feature type="site" description="Important for interaction with BMAL1" evidence="3">
    <location>
        <position position="84"/>
    </location>
</feature>
<feature type="modified residue" description="Phosphoserine" evidence="2">
    <location>
        <position position="38"/>
    </location>
</feature>
<feature type="modified residue" description="Phosphoserine" evidence="2">
    <location>
        <position position="42"/>
    </location>
</feature>
<feature type="modified residue" description="Phosphoserine" evidence="2">
    <location>
        <position position="408"/>
    </location>
</feature>
<feature type="modified residue" description="Phosphoserine; by GSK3-beta" evidence="2">
    <location>
        <position position="427"/>
    </location>
</feature>
<feature type="modified residue" description="Phosphothreonine; by CDK5" evidence="2">
    <location>
        <position position="451"/>
    </location>
</feature>
<feature type="modified residue" description="Phosphothreonine; by CDK5" evidence="2">
    <location>
        <position position="461"/>
    </location>
</feature>
<feature type="cross-link" description="Glycyl lysine isopeptide (Lys-Gly) (interchain with G-Cter in SUMO1)" evidence="2">
    <location>
        <position position="67"/>
    </location>
</feature>
<feature type="cross-link" description="Glycyl lysine isopeptide (Lys-Gly) (interchain with G-Cter in SUMO1)" evidence="2">
    <location>
        <position position="871"/>
    </location>
</feature>
<feature type="splice variant" id="VSP_021796" description="In isoform 2." evidence="11 12 13">
    <location>
        <begin position="567"/>
        <end position="585"/>
    </location>
</feature>
<feature type="sequence conflict" description="In Ref. 1; AAD43283." evidence="14" ref="1">
    <original>L</original>
    <variation>P</variation>
    <location>
        <position position="105"/>
    </location>
</feature>
<feature type="sequence conflict" description="In Ref. 2; AAD32860." evidence="14" ref="2">
    <original>E</original>
    <variation>Q</variation>
    <location>
        <position position="160"/>
    </location>
</feature>
<feature type="sequence conflict" description="In Ref. 1; AAD43283." evidence="14" ref="1">
    <original>G</original>
    <variation>D</variation>
    <location>
        <position position="217"/>
    </location>
</feature>
<feature type="sequence conflict" description="In Ref. 1; AAD43283." evidence="14" ref="1">
    <original>L</original>
    <variation>H</variation>
    <location>
        <position position="507"/>
    </location>
</feature>
<feature type="sequence conflict" description="In Ref. 2; AAD32860." evidence="14" ref="2">
    <location>
        <begin position="514"/>
        <end position="517"/>
    </location>
</feature>
<feature type="sequence conflict" description="In Ref. 2; AAD32860." evidence="14" ref="2">
    <original>Q</original>
    <variation>QQ</variation>
    <location>
        <position position="785"/>
    </location>
</feature>
<feature type="sequence conflict" description="In Ref. 3; AAL98708." evidence="14" ref="3">
    <original>Q</original>
    <variation>QQ</variation>
    <location>
        <position position="796"/>
    </location>
</feature>
<proteinExistence type="evidence at protein level"/>
<sequence length="875" mass="98659">MFFTISTHKMSSIADRNDGSIFDGLVEEDDKDKAKRVSRNKSEKKRRDQFNVLIKELGSMLPGNARKMDKSTVLQKSIDFLRKHKEITAQSDASEIRQDWKPTFLSNEEFTQLMLEALDGFFLAIMTDGNIIYVSESVTPLLEHLPSDLVDQSVFNFIPEGEHSEIYKILSSHLLESDSLTPEYLKSKNQLEFCCHMLRGTIDPKEQPTYEYVKFIGNFKCLNNVPNSAHNGFEGTIQRSHRPSYEDKVCFIATVRLATPQFIKEMCTVEEPNEEFTSRHSLEWKFLFLDHRAPPIIGYLPFEVLGTSGYDYYHVDDLDNLAKCHEHLMQYGKGKSCYYRFLTKGQQWIWLQTHYYITYHQWNSRPEFIVCTHTVVSYAEVRAERRRELGIEESLPEIKADKSQDSGSDNHINTVSLKEALERFDTSPTPSASSRSSRKSSHTAVSDHSSTPTKMTVDTSTPPRQSLSAHEKSTQRRSSLSSQSLSSQSLGQPVTQPTMSQPATLQLQSSMSQPVFQFSAQLGAMQHLKDQLEQRTRMIEANIHRQQEELRKIQEQLQIVHGQGLQLSSGPCVPKIHRTDVTVPEMFLQQSTSGLNFSSVQLTSGNSSSVQQLAPGNMQGQVVQTNQTQSGMNTGHTSTPHMIQQQPLQSSASQHNQQNVLSGHGQQSSLAGQSQNTVSTPLYNTMVISQPTAGNVVQVPSSLPQNNNQNAAAVTTFTQDRQIRFSQGQQLVTKLVTAPVACGAVMVPSTMFMGQVVTAYPTFAAQQQQPQTLPVTQQQQQQQQQSQQDQQQQQQQLTAVQQPAQPQLTQHPQQFLQTSRLLHGNQSAQLILSAAFPLQQSTFTQSHHQQHQPQQQQLSRHRTDKMTDPSKAQPQ</sequence>
<dbReference type="EMBL" id="AF132531">
    <property type="protein sequence ID" value="AAD43283.1"/>
    <property type="molecule type" value="mRNA"/>
</dbReference>
<dbReference type="EMBL" id="AF144425">
    <property type="protein sequence ID" value="AAD32860.1"/>
    <property type="molecule type" value="mRNA"/>
</dbReference>
<dbReference type="EMBL" id="AF246959">
    <property type="protein sequence ID" value="AAL98708.1"/>
    <property type="molecule type" value="mRNA"/>
</dbReference>
<dbReference type="RefSeq" id="NP_001276763.1">
    <property type="nucleotide sequence ID" value="NM_001289834.1"/>
</dbReference>
<dbReference type="RefSeq" id="NP_989505.2">
    <property type="nucleotide sequence ID" value="NM_204174.3"/>
</dbReference>
<dbReference type="SMR" id="Q8QGQ6"/>
<dbReference type="FunCoup" id="Q8QGQ6">
    <property type="interactions" value="931"/>
</dbReference>
<dbReference type="STRING" id="9031.ENSGALP00000036748"/>
<dbReference type="GlyGen" id="Q8QGQ6">
    <property type="glycosylation" value="1 site"/>
</dbReference>
<dbReference type="PaxDb" id="9031-ENSGALP00000036747"/>
<dbReference type="KEGG" id="gga:373991"/>
<dbReference type="VEuPathDB" id="HostDB:geneid_373991"/>
<dbReference type="eggNOG" id="KOG3561">
    <property type="taxonomic scope" value="Eukaryota"/>
</dbReference>
<dbReference type="InParanoid" id="Q8QGQ6"/>
<dbReference type="OrthoDB" id="411251at2759"/>
<dbReference type="PhylomeDB" id="Q8QGQ6"/>
<dbReference type="PRO" id="PR:Q8QGQ6"/>
<dbReference type="Proteomes" id="UP000000539">
    <property type="component" value="Unassembled WGS sequence"/>
</dbReference>
<dbReference type="GO" id="GO:1990513">
    <property type="term" value="C:CLOCK-BMAL transcription complex"/>
    <property type="evidence" value="ECO:0000318"/>
    <property type="project" value="GO_Central"/>
</dbReference>
<dbReference type="GO" id="GO:0005829">
    <property type="term" value="C:cytosol"/>
    <property type="evidence" value="ECO:0000250"/>
    <property type="project" value="UniProtKB"/>
</dbReference>
<dbReference type="GO" id="GO:0005634">
    <property type="term" value="C:nucleus"/>
    <property type="evidence" value="ECO:0000250"/>
    <property type="project" value="UniProtKB"/>
</dbReference>
<dbReference type="GO" id="GO:0003677">
    <property type="term" value="F:DNA binding"/>
    <property type="evidence" value="ECO:0000250"/>
    <property type="project" value="UniProtKB"/>
</dbReference>
<dbReference type="GO" id="GO:0000981">
    <property type="term" value="F:DNA-binding transcription factor activity, RNA polymerase II-specific"/>
    <property type="evidence" value="ECO:0000318"/>
    <property type="project" value="GO_Central"/>
</dbReference>
<dbReference type="GO" id="GO:0070888">
    <property type="term" value="F:E-box binding"/>
    <property type="evidence" value="ECO:0000318"/>
    <property type="project" value="GO_Central"/>
</dbReference>
<dbReference type="GO" id="GO:0046983">
    <property type="term" value="F:protein dimerization activity"/>
    <property type="evidence" value="ECO:0007669"/>
    <property type="project" value="InterPro"/>
</dbReference>
<dbReference type="GO" id="GO:0000978">
    <property type="term" value="F:RNA polymerase II cis-regulatory region sequence-specific DNA binding"/>
    <property type="evidence" value="ECO:0000314"/>
    <property type="project" value="UniProtKB"/>
</dbReference>
<dbReference type="GO" id="GO:0032922">
    <property type="term" value="P:circadian regulation of gene expression"/>
    <property type="evidence" value="ECO:0000315"/>
    <property type="project" value="UniProtKB"/>
</dbReference>
<dbReference type="GO" id="GO:0006974">
    <property type="term" value="P:DNA damage response"/>
    <property type="evidence" value="ECO:0007669"/>
    <property type="project" value="UniProtKB-KW"/>
</dbReference>
<dbReference type="GO" id="GO:0006473">
    <property type="term" value="P:protein acetylation"/>
    <property type="evidence" value="ECO:0000250"/>
    <property type="project" value="UniProtKB"/>
</dbReference>
<dbReference type="GO" id="GO:0006357">
    <property type="term" value="P:regulation of transcription by RNA polymerase II"/>
    <property type="evidence" value="ECO:0000318"/>
    <property type="project" value="GO_Central"/>
</dbReference>
<dbReference type="GO" id="GO:0051775">
    <property type="term" value="P:response to redox state"/>
    <property type="evidence" value="ECO:0000250"/>
    <property type="project" value="UniProtKB"/>
</dbReference>
<dbReference type="CDD" id="cd19734">
    <property type="entry name" value="bHLH-PAS_CLOCK"/>
    <property type="match status" value="1"/>
</dbReference>
<dbReference type="CDD" id="cd00130">
    <property type="entry name" value="PAS"/>
    <property type="match status" value="2"/>
</dbReference>
<dbReference type="FunFam" id="3.30.450.20:FF:000016">
    <property type="entry name" value="Circadian locomoter output cycles protein"/>
    <property type="match status" value="1"/>
</dbReference>
<dbReference type="FunFam" id="4.10.280.10:FF:000013">
    <property type="entry name" value="Circadian locomoter output cycles protein kaput"/>
    <property type="match status" value="1"/>
</dbReference>
<dbReference type="FunFam" id="3.30.450.20:FF:000022">
    <property type="entry name" value="circadian locomoter output cycles protein kaput"/>
    <property type="match status" value="1"/>
</dbReference>
<dbReference type="Gene3D" id="4.10.280.10">
    <property type="entry name" value="Helix-loop-helix DNA-binding domain"/>
    <property type="match status" value="1"/>
</dbReference>
<dbReference type="Gene3D" id="3.30.450.20">
    <property type="entry name" value="PAS domain"/>
    <property type="match status" value="2"/>
</dbReference>
<dbReference type="InterPro" id="IPR011598">
    <property type="entry name" value="bHLH_dom"/>
</dbReference>
<dbReference type="InterPro" id="IPR047230">
    <property type="entry name" value="CLOCK-like"/>
</dbReference>
<dbReference type="InterPro" id="IPR036638">
    <property type="entry name" value="HLH_DNA-bd_sf"/>
</dbReference>
<dbReference type="InterPro" id="IPR001067">
    <property type="entry name" value="Nuc_translocat"/>
</dbReference>
<dbReference type="InterPro" id="IPR001610">
    <property type="entry name" value="PAC"/>
</dbReference>
<dbReference type="InterPro" id="IPR000014">
    <property type="entry name" value="PAS"/>
</dbReference>
<dbReference type="InterPro" id="IPR035965">
    <property type="entry name" value="PAS-like_dom_sf"/>
</dbReference>
<dbReference type="InterPro" id="IPR013767">
    <property type="entry name" value="PAS_fold"/>
</dbReference>
<dbReference type="PANTHER" id="PTHR46055">
    <property type="entry name" value="CIRCADIAN LOCOMOTER OUTPUT CYCLES PROTEIN KAPUT"/>
    <property type="match status" value="1"/>
</dbReference>
<dbReference type="PANTHER" id="PTHR46055:SF2">
    <property type="entry name" value="CIRCADIAN LOCOMOTER OUTPUT CYCLES PROTEIN KAPUT"/>
    <property type="match status" value="1"/>
</dbReference>
<dbReference type="Pfam" id="PF00010">
    <property type="entry name" value="HLH"/>
    <property type="match status" value="1"/>
</dbReference>
<dbReference type="Pfam" id="PF00989">
    <property type="entry name" value="PAS"/>
    <property type="match status" value="1"/>
</dbReference>
<dbReference type="Pfam" id="PF14598">
    <property type="entry name" value="PAS_11"/>
    <property type="match status" value="1"/>
</dbReference>
<dbReference type="PRINTS" id="PR00785">
    <property type="entry name" value="NCTRNSLOCATR"/>
</dbReference>
<dbReference type="SMART" id="SM00353">
    <property type="entry name" value="HLH"/>
    <property type="match status" value="1"/>
</dbReference>
<dbReference type="SMART" id="SM00086">
    <property type="entry name" value="PAC"/>
    <property type="match status" value="1"/>
</dbReference>
<dbReference type="SMART" id="SM00091">
    <property type="entry name" value="PAS"/>
    <property type="match status" value="2"/>
</dbReference>
<dbReference type="SUPFAM" id="SSF47459">
    <property type="entry name" value="HLH, helix-loop-helix DNA-binding domain"/>
    <property type="match status" value="1"/>
</dbReference>
<dbReference type="SUPFAM" id="SSF55785">
    <property type="entry name" value="PYP-like sensor domain (PAS domain)"/>
    <property type="match status" value="2"/>
</dbReference>
<dbReference type="PROSITE" id="PS50888">
    <property type="entry name" value="BHLH"/>
    <property type="match status" value="1"/>
</dbReference>
<dbReference type="PROSITE" id="PS50112">
    <property type="entry name" value="PAS"/>
    <property type="match status" value="2"/>
</dbReference>
<protein>
    <recommendedName>
        <fullName>Circadian locomoter output cycles protein kaput</fullName>
    </recommendedName>
</protein>
<keyword id="KW-0010">Activator</keyword>
<keyword id="KW-0025">Alternative splicing</keyword>
<keyword id="KW-0090">Biological rhythms</keyword>
<keyword id="KW-0963">Cytoplasm</keyword>
<keyword id="KW-0227">DNA damage</keyword>
<keyword id="KW-0238">DNA-binding</keyword>
<keyword id="KW-1017">Isopeptide bond</keyword>
<keyword id="KW-0539">Nucleus</keyword>
<keyword id="KW-0597">Phosphoprotein</keyword>
<keyword id="KW-1185">Reference proteome</keyword>
<keyword id="KW-0677">Repeat</keyword>
<keyword id="KW-0804">Transcription</keyword>
<keyword id="KW-0805">Transcription regulation</keyword>
<keyword id="KW-0832">Ubl conjugation</keyword>